<name>RS14Z_LISMO</name>
<sequence length="61" mass="7147">MAKKSMIAKQKRTPKYAVQAYTRCERCGRPHSVIRKFKLCRICFRELAYKGQIPGVKKASW</sequence>
<protein>
    <recommendedName>
        <fullName evidence="1">Small ribosomal subunit protein uS14B</fullName>
    </recommendedName>
    <alternativeName>
        <fullName evidence="2">30S ribosomal protein S14 type Z</fullName>
    </alternativeName>
</protein>
<reference key="1">
    <citation type="journal article" date="2001" name="Science">
        <title>Comparative genomics of Listeria species.</title>
        <authorList>
            <person name="Glaser P."/>
            <person name="Frangeul L."/>
            <person name="Buchrieser C."/>
            <person name="Rusniok C."/>
            <person name="Amend A."/>
            <person name="Baquero F."/>
            <person name="Berche P."/>
            <person name="Bloecker H."/>
            <person name="Brandt P."/>
            <person name="Chakraborty T."/>
            <person name="Charbit A."/>
            <person name="Chetouani F."/>
            <person name="Couve E."/>
            <person name="de Daruvar A."/>
            <person name="Dehoux P."/>
            <person name="Domann E."/>
            <person name="Dominguez-Bernal G."/>
            <person name="Duchaud E."/>
            <person name="Durant L."/>
            <person name="Dussurget O."/>
            <person name="Entian K.-D."/>
            <person name="Fsihi H."/>
            <person name="Garcia-del Portillo F."/>
            <person name="Garrido P."/>
            <person name="Gautier L."/>
            <person name="Goebel W."/>
            <person name="Gomez-Lopez N."/>
            <person name="Hain T."/>
            <person name="Hauf J."/>
            <person name="Jackson D."/>
            <person name="Jones L.-M."/>
            <person name="Kaerst U."/>
            <person name="Kreft J."/>
            <person name="Kuhn M."/>
            <person name="Kunst F."/>
            <person name="Kurapkat G."/>
            <person name="Madueno E."/>
            <person name="Maitournam A."/>
            <person name="Mata Vicente J."/>
            <person name="Ng E."/>
            <person name="Nedjari H."/>
            <person name="Nordsiek G."/>
            <person name="Novella S."/>
            <person name="de Pablos B."/>
            <person name="Perez-Diaz J.-C."/>
            <person name="Purcell R."/>
            <person name="Remmel B."/>
            <person name="Rose M."/>
            <person name="Schlueter T."/>
            <person name="Simoes N."/>
            <person name="Tierrez A."/>
            <person name="Vazquez-Boland J.-A."/>
            <person name="Voss H."/>
            <person name="Wehland J."/>
            <person name="Cossart P."/>
        </authorList>
    </citation>
    <scope>NUCLEOTIDE SEQUENCE [LARGE SCALE GENOMIC DNA]</scope>
    <source>
        <strain>ATCC BAA-679 / EGD-e</strain>
    </source>
</reference>
<evidence type="ECO:0000255" key="1">
    <source>
        <dbReference type="HAMAP-Rule" id="MF_01364"/>
    </source>
</evidence>
<evidence type="ECO:0000305" key="2"/>
<feature type="chain" id="PRO_0000130900" description="Small ribosomal subunit protein uS14B">
    <location>
        <begin position="1"/>
        <end position="61"/>
    </location>
</feature>
<feature type="binding site" evidence="1">
    <location>
        <position position="24"/>
    </location>
    <ligand>
        <name>Zn(2+)</name>
        <dbReference type="ChEBI" id="CHEBI:29105"/>
    </ligand>
</feature>
<feature type="binding site" evidence="1">
    <location>
        <position position="27"/>
    </location>
    <ligand>
        <name>Zn(2+)</name>
        <dbReference type="ChEBI" id="CHEBI:29105"/>
    </ligand>
</feature>
<feature type="binding site" evidence="1">
    <location>
        <position position="40"/>
    </location>
    <ligand>
        <name>Zn(2+)</name>
        <dbReference type="ChEBI" id="CHEBI:29105"/>
    </ligand>
</feature>
<feature type="binding site" evidence="1">
    <location>
        <position position="43"/>
    </location>
    <ligand>
        <name>Zn(2+)</name>
        <dbReference type="ChEBI" id="CHEBI:29105"/>
    </ligand>
</feature>
<dbReference type="EMBL" id="AL591983">
    <property type="protein sequence ID" value="CAD00697.1"/>
    <property type="molecule type" value="Genomic_DNA"/>
</dbReference>
<dbReference type="PIR" id="AC1402">
    <property type="entry name" value="AC1402"/>
</dbReference>
<dbReference type="RefSeq" id="WP_003723684.1">
    <property type="nucleotide sequence ID" value="NZ_CP149495.1"/>
</dbReference>
<dbReference type="PDB" id="7NHN">
    <property type="method" value="EM"/>
    <property type="resolution" value="2.90 A"/>
    <property type="chains" value="o=1-61"/>
</dbReference>
<dbReference type="PDBsum" id="7NHN"/>
<dbReference type="EMDB" id="EMD-12334"/>
<dbReference type="SMR" id="P66401"/>
<dbReference type="STRING" id="169963.gene:17595337"/>
<dbReference type="PaxDb" id="169963-lmo2619"/>
<dbReference type="EnsemblBacteria" id="CAD00697">
    <property type="protein sequence ID" value="CAD00697"/>
    <property type="gene ID" value="CAD00697"/>
</dbReference>
<dbReference type="KEGG" id="lmo:lmo2619"/>
<dbReference type="PATRIC" id="fig|169963.11.peg.2683"/>
<dbReference type="eggNOG" id="COG0199">
    <property type="taxonomic scope" value="Bacteria"/>
</dbReference>
<dbReference type="HOGENOM" id="CLU_139869_3_0_9"/>
<dbReference type="OrthoDB" id="9810484at2"/>
<dbReference type="PhylomeDB" id="P66401"/>
<dbReference type="BioCyc" id="LMON169963:LMO2619-MONOMER"/>
<dbReference type="Proteomes" id="UP000000817">
    <property type="component" value="Chromosome"/>
</dbReference>
<dbReference type="GO" id="GO:0015935">
    <property type="term" value="C:small ribosomal subunit"/>
    <property type="evidence" value="ECO:0000318"/>
    <property type="project" value="GO_Central"/>
</dbReference>
<dbReference type="GO" id="GO:0019843">
    <property type="term" value="F:rRNA binding"/>
    <property type="evidence" value="ECO:0007669"/>
    <property type="project" value="UniProtKB-UniRule"/>
</dbReference>
<dbReference type="GO" id="GO:0003735">
    <property type="term" value="F:structural constituent of ribosome"/>
    <property type="evidence" value="ECO:0000318"/>
    <property type="project" value="GO_Central"/>
</dbReference>
<dbReference type="GO" id="GO:0008270">
    <property type="term" value="F:zinc ion binding"/>
    <property type="evidence" value="ECO:0007669"/>
    <property type="project" value="UniProtKB-UniRule"/>
</dbReference>
<dbReference type="GO" id="GO:0006412">
    <property type="term" value="P:translation"/>
    <property type="evidence" value="ECO:0000318"/>
    <property type="project" value="GO_Central"/>
</dbReference>
<dbReference type="FunFam" id="4.10.830.10:FF:000001">
    <property type="entry name" value="30S ribosomal protein S14 type Z"/>
    <property type="match status" value="1"/>
</dbReference>
<dbReference type="Gene3D" id="4.10.830.10">
    <property type="entry name" value="30s Ribosomal Protein S14, Chain N"/>
    <property type="match status" value="1"/>
</dbReference>
<dbReference type="HAMAP" id="MF_01364_B">
    <property type="entry name" value="Ribosomal_uS14_2_B"/>
    <property type="match status" value="1"/>
</dbReference>
<dbReference type="InterPro" id="IPR001209">
    <property type="entry name" value="Ribosomal_uS14"/>
</dbReference>
<dbReference type="InterPro" id="IPR023053">
    <property type="entry name" value="Ribosomal_uS14_bact"/>
</dbReference>
<dbReference type="InterPro" id="IPR018271">
    <property type="entry name" value="Ribosomal_uS14_CS"/>
</dbReference>
<dbReference type="InterPro" id="IPR043140">
    <property type="entry name" value="Ribosomal_uS14_sf"/>
</dbReference>
<dbReference type="NCBIfam" id="NF005974">
    <property type="entry name" value="PRK08061.1"/>
    <property type="match status" value="1"/>
</dbReference>
<dbReference type="PANTHER" id="PTHR19836">
    <property type="entry name" value="30S RIBOSOMAL PROTEIN S14"/>
    <property type="match status" value="1"/>
</dbReference>
<dbReference type="PANTHER" id="PTHR19836:SF26">
    <property type="entry name" value="SMALL RIBOSOMAL SUBUNIT PROTEIN US14B"/>
    <property type="match status" value="1"/>
</dbReference>
<dbReference type="Pfam" id="PF00253">
    <property type="entry name" value="Ribosomal_S14"/>
    <property type="match status" value="1"/>
</dbReference>
<dbReference type="SUPFAM" id="SSF57716">
    <property type="entry name" value="Glucocorticoid receptor-like (DNA-binding domain)"/>
    <property type="match status" value="1"/>
</dbReference>
<dbReference type="PROSITE" id="PS00527">
    <property type="entry name" value="RIBOSOMAL_S14"/>
    <property type="match status" value="1"/>
</dbReference>
<gene>
    <name evidence="1" type="primary">rpsZ</name>
    <name evidence="1" type="synonym">rpsN1</name>
    <name type="ordered locus">lmo2619</name>
</gene>
<organism>
    <name type="scientific">Listeria monocytogenes serovar 1/2a (strain ATCC BAA-679 / EGD-e)</name>
    <dbReference type="NCBI Taxonomy" id="169963"/>
    <lineage>
        <taxon>Bacteria</taxon>
        <taxon>Bacillati</taxon>
        <taxon>Bacillota</taxon>
        <taxon>Bacilli</taxon>
        <taxon>Bacillales</taxon>
        <taxon>Listeriaceae</taxon>
        <taxon>Listeria</taxon>
    </lineage>
</organism>
<proteinExistence type="evidence at protein level"/>
<comment type="function">
    <text evidence="1">Binds 16S rRNA, required for the assembly of 30S particles and may also be responsible for determining the conformation of the 16S rRNA at the A site.</text>
</comment>
<comment type="cofactor">
    <cofactor evidence="1">
        <name>Zn(2+)</name>
        <dbReference type="ChEBI" id="CHEBI:29105"/>
    </cofactor>
    <text evidence="1">Binds 1 zinc ion per subunit.</text>
</comment>
<comment type="subunit">
    <text evidence="1">Part of the 30S ribosomal subunit. Contacts proteins S3 and S10.</text>
</comment>
<comment type="similarity">
    <text evidence="1">Belongs to the universal ribosomal protein uS14 family. Zinc-binding uS14 subfamily.</text>
</comment>
<accession>P66401</accession>
<accession>Q927M0</accession>
<keyword id="KW-0002">3D-structure</keyword>
<keyword id="KW-0479">Metal-binding</keyword>
<keyword id="KW-1185">Reference proteome</keyword>
<keyword id="KW-0687">Ribonucleoprotein</keyword>
<keyword id="KW-0689">Ribosomal protein</keyword>
<keyword id="KW-0694">RNA-binding</keyword>
<keyword id="KW-0699">rRNA-binding</keyword>
<keyword id="KW-0862">Zinc</keyword>